<comment type="function">
    <text evidence="2 3 7">FAD-linked oxidoreductase; part of the gene cluster that mediates the biosynthesis of pleosporalin A, ascomycone A, as well as a third cryptic naphthoquinone derived pigment, all responsible for the coloration of conidia (PubMed:28471414, PubMed:35351612). The pathway begins with the biosynthesis of the cyclized heptaketide 3-acetonyl-1,6,8-trihydroxy-2-naphthaldehyde by the NR-PKS pgmA. The C-6 hydroxyl group is further methylated by the O-methyltransferase pgmB to yield fusarubinaldehyde which is in turn oxidized by the cytochrome P450 monooxygenase pgmC at C-9. The C-1 hydroxyl group is then methylated spontaneously. Although pgmE, pgmD and pgmH are essential for the production of pleosporalin A, it is not the case for the 2 other final products and it remains difficult to assign a specific function to each enzyme. PgmF and pgmG seem not to be involved in pigment biosynthesis although they were regulated by the cluster-specific transcription factor pgmR (Probable) (PubMed:35351612).</text>
</comment>
<comment type="induction">
    <text evidence="2 3">Expression is significantly up-regulated at the end of late growth phase, in the presence of Butyrolactone I (PubMed:28471414). Expression is positively regulated by the pgm cluster-specific transcription factor pgmR (PubMed:35351612).</text>
</comment>
<comment type="disruption phenotype">
    <text evidence="3">Does not affect the production of the naphthoquinones derived pigments.</text>
</comment>
<comment type="similarity">
    <text evidence="6">Belongs to the zinc-containing alcohol dehydrogenase family.</text>
</comment>
<dbReference type="EC" id="1.-.-.-" evidence="7"/>
<dbReference type="EMBL" id="KX470750">
    <property type="protein sequence ID" value="ARB51367.1"/>
    <property type="molecule type" value="mRNA"/>
</dbReference>
<dbReference type="SMR" id="A0A1W5SKT4"/>
<dbReference type="VEuPathDB" id="FungiDB:ATEG_06209"/>
<dbReference type="GO" id="GO:0005739">
    <property type="term" value="C:mitochondrion"/>
    <property type="evidence" value="ECO:0007669"/>
    <property type="project" value="TreeGrafter"/>
</dbReference>
<dbReference type="GO" id="GO:0000166">
    <property type="term" value="F:nucleotide binding"/>
    <property type="evidence" value="ECO:0007669"/>
    <property type="project" value="UniProtKB-KW"/>
</dbReference>
<dbReference type="GO" id="GO:0016491">
    <property type="term" value="F:oxidoreductase activity"/>
    <property type="evidence" value="ECO:0007669"/>
    <property type="project" value="UniProtKB-KW"/>
</dbReference>
<dbReference type="CDD" id="cd08267">
    <property type="entry name" value="MDR1"/>
    <property type="match status" value="1"/>
</dbReference>
<dbReference type="Gene3D" id="3.90.180.10">
    <property type="entry name" value="Medium-chain alcohol dehydrogenases, catalytic domain"/>
    <property type="match status" value="1"/>
</dbReference>
<dbReference type="Gene3D" id="3.40.50.720">
    <property type="entry name" value="NAD(P)-binding Rossmann-like Domain"/>
    <property type="match status" value="1"/>
</dbReference>
<dbReference type="InterPro" id="IPR013154">
    <property type="entry name" value="ADH-like_N"/>
</dbReference>
<dbReference type="InterPro" id="IPR011032">
    <property type="entry name" value="GroES-like_sf"/>
</dbReference>
<dbReference type="InterPro" id="IPR036291">
    <property type="entry name" value="NAD(P)-bd_dom_sf"/>
</dbReference>
<dbReference type="InterPro" id="IPR020843">
    <property type="entry name" value="PKS_ER"/>
</dbReference>
<dbReference type="InterPro" id="IPR050700">
    <property type="entry name" value="YIM1/Zinc_Alcohol_DH_Fams"/>
</dbReference>
<dbReference type="PANTHER" id="PTHR11695">
    <property type="entry name" value="ALCOHOL DEHYDROGENASE RELATED"/>
    <property type="match status" value="1"/>
</dbReference>
<dbReference type="PANTHER" id="PTHR11695:SF294">
    <property type="entry name" value="RETICULON-4-INTERACTING PROTEIN 1, MITOCHONDRIAL"/>
    <property type="match status" value="1"/>
</dbReference>
<dbReference type="Pfam" id="PF08240">
    <property type="entry name" value="ADH_N"/>
    <property type="match status" value="1"/>
</dbReference>
<dbReference type="Pfam" id="PF13602">
    <property type="entry name" value="ADH_zinc_N_2"/>
    <property type="match status" value="1"/>
</dbReference>
<dbReference type="SMART" id="SM00829">
    <property type="entry name" value="PKS_ER"/>
    <property type="match status" value="1"/>
</dbReference>
<dbReference type="SUPFAM" id="SSF50129">
    <property type="entry name" value="GroES-like"/>
    <property type="match status" value="1"/>
</dbReference>
<dbReference type="SUPFAM" id="SSF51735">
    <property type="entry name" value="NAD(P)-binding Rossmann-fold domains"/>
    <property type="match status" value="1"/>
</dbReference>
<accession>A0A1W5SKT4</accession>
<feature type="chain" id="PRO_0000456011" description="Trans-enoyl reductase pgmF">
    <location>
        <begin position="1"/>
        <end position="356"/>
    </location>
</feature>
<feature type="binding site" evidence="1">
    <location>
        <begin position="57"/>
        <end position="60"/>
    </location>
    <ligand>
        <name>NADP(+)</name>
        <dbReference type="ChEBI" id="CHEBI:58349"/>
    </ligand>
</feature>
<feature type="binding site" evidence="1">
    <location>
        <begin position="175"/>
        <end position="178"/>
    </location>
    <ligand>
        <name>NADP(+)</name>
        <dbReference type="ChEBI" id="CHEBI:58349"/>
    </ligand>
</feature>
<feature type="binding site" evidence="1">
    <location>
        <begin position="198"/>
        <end position="201"/>
    </location>
    <ligand>
        <name>NADP(+)</name>
        <dbReference type="ChEBI" id="CHEBI:58349"/>
    </ligand>
</feature>
<feature type="binding site" evidence="1">
    <location>
        <position position="216"/>
    </location>
    <ligand>
        <name>NADP(+)</name>
        <dbReference type="ChEBI" id="CHEBI:58349"/>
    </ligand>
</feature>
<feature type="binding site" evidence="1">
    <location>
        <begin position="261"/>
        <end position="262"/>
    </location>
    <ligand>
        <name>NADP(+)</name>
        <dbReference type="ChEBI" id="CHEBI:58349"/>
    </ligand>
</feature>
<feature type="binding site" evidence="1">
    <location>
        <begin position="342"/>
        <end position="343"/>
    </location>
    <ligand>
        <name>NADP(+)</name>
        <dbReference type="ChEBI" id="CHEBI:58349"/>
    </ligand>
</feature>
<proteinExistence type="evidence at transcript level"/>
<keyword id="KW-0521">NADP</keyword>
<keyword id="KW-0547">Nucleotide-binding</keyword>
<keyword id="KW-0560">Oxidoreductase</keyword>
<protein>
    <recommendedName>
        <fullName evidence="5">Trans-enoyl reductase pgmF</fullName>
        <ecNumber evidence="7">1.-.-.-</ecNumber>
    </recommendedName>
    <alternativeName>
        <fullName evidence="5">Pigmented naphthoquinones biosynthesis cluster protein F</fullName>
    </alternativeName>
</protein>
<organism>
    <name type="scientific">Aspergillus terreus</name>
    <dbReference type="NCBI Taxonomy" id="33178"/>
    <lineage>
        <taxon>Eukaryota</taxon>
        <taxon>Fungi</taxon>
        <taxon>Dikarya</taxon>
        <taxon>Ascomycota</taxon>
        <taxon>Pezizomycotina</taxon>
        <taxon>Eurotiomycetes</taxon>
        <taxon>Eurotiomycetidae</taxon>
        <taxon>Eurotiales</taxon>
        <taxon>Aspergillaceae</taxon>
        <taxon>Aspergillus</taxon>
        <taxon>Aspergillus subgen. Circumdati</taxon>
    </lineage>
</organism>
<reference key="1">
    <citation type="journal article" date="2017" name="Microorganisms">
        <title>Melanisation of Aspergillus terreus-is butyrolactone I involved in the regulation of both DOPA and DHN types of pigments in submerged culture?</title>
        <authorList>
            <person name="Palonen E.K."/>
            <person name="Raina S."/>
            <person name="Brandt A."/>
            <person name="Meriluoto J."/>
            <person name="Keshavarz T."/>
            <person name="Soini J.T."/>
        </authorList>
    </citation>
    <scope>NUCLEOTIDE SEQUENCE [GENOMIC DNA]</scope>
    <scope>IDENTIFICATION</scope>
    <scope>FUNCTION</scope>
    <scope>INDUCTION</scope>
    <source>
        <strain>MUCL38669</strain>
    </source>
</reference>
<reference key="2">
    <citation type="journal article" date="2022" name="Fungal Genet. Biol.">
        <title>Identification of a polyketide biosynthesis gene cluster by transcriptional regulator activation in Aspergillus terreus.</title>
        <authorList>
            <person name="Tang S."/>
            <person name="Men P."/>
            <person name="Zhang W."/>
            <person name="Li H."/>
            <person name="Li Z."/>
            <person name="Huang X."/>
            <person name="Lu X."/>
        </authorList>
    </citation>
    <scope>FUNCTION</scope>
    <scope>INDUCTION</scope>
    <scope>DISRUPTION PHENOTYPE</scope>
</reference>
<name>PGMF_ASPTE</name>
<sequence length="356" mass="38320">MASTVPSTMKAWQFSSASPTIEANLKLNNNAPLPDGANNLGPDQVLVKVIAAGLNPVDFKFAEIPWLGRLIVGSPSTPGMDFAGRVVATGPNTKSVAVEDLKPGQLVFGRLDSPSKFGTLAEYTIAPRKGCVAIPPGARVIETACVASVGLTAYQSIVYRLKDHTGKRIFLNGGSGGCGTFGIQIAKQMGCHVTTSCSTPNVDLCRSLGADTVIDYKKTDVIAELKKMQPFDLVVDNVGVPTDLYWAAPSFTNPGAPYVQVGALAVTPGFILGNFFKARWPGWLGGGKRPWEFMHIESNVQDYEQLGRWMQEGKLRAVVDEVFGMQDDGPVKAYQKLRTGRAKGKIIVKIDETWED</sequence>
<gene>
    <name evidence="4" type="primary">pgmF</name>
</gene>
<evidence type="ECO:0000250" key="1">
    <source>
        <dbReference type="UniProtKB" id="Q9Y7D0"/>
    </source>
</evidence>
<evidence type="ECO:0000269" key="2">
    <source>
    </source>
</evidence>
<evidence type="ECO:0000269" key="3">
    <source>
    </source>
</evidence>
<evidence type="ECO:0000303" key="4">
    <source>
    </source>
</evidence>
<evidence type="ECO:0000303" key="5">
    <source>
    </source>
</evidence>
<evidence type="ECO:0000305" key="6"/>
<evidence type="ECO:0000305" key="7">
    <source>
    </source>
</evidence>